<keyword id="KW-1185">Reference proteome</keyword>
<keyword id="KW-0687">Ribonucleoprotein</keyword>
<keyword id="KW-0689">Ribosomal protein</keyword>
<keyword id="KW-0694">RNA-binding</keyword>
<keyword id="KW-0699">rRNA-binding</keyword>
<protein>
    <recommendedName>
        <fullName evidence="1">Large ribosomal subunit protein uL22</fullName>
    </recommendedName>
    <alternativeName>
        <fullName evidence="2">50S ribosomal protein L22</fullName>
    </alternativeName>
</protein>
<feature type="chain" id="PRO_0000354474" description="Large ribosomal subunit protein uL22">
    <location>
        <begin position="1"/>
        <end position="141"/>
    </location>
</feature>
<gene>
    <name evidence="1" type="primary">rplV</name>
    <name type="ordered locus">FRAAL1086</name>
</gene>
<dbReference type="EMBL" id="CT573213">
    <property type="protein sequence ID" value="CAJ59751.1"/>
    <property type="molecule type" value="Genomic_DNA"/>
</dbReference>
<dbReference type="RefSeq" id="WP_011602302.1">
    <property type="nucleotide sequence ID" value="NC_008278.1"/>
</dbReference>
<dbReference type="SMR" id="Q0RRR6"/>
<dbReference type="STRING" id="326424.FRAAL1086"/>
<dbReference type="KEGG" id="fal:FRAAL1086"/>
<dbReference type="eggNOG" id="COG0091">
    <property type="taxonomic scope" value="Bacteria"/>
</dbReference>
<dbReference type="HOGENOM" id="CLU_083987_3_2_11"/>
<dbReference type="OrthoDB" id="9805969at2"/>
<dbReference type="Proteomes" id="UP000000657">
    <property type="component" value="Chromosome"/>
</dbReference>
<dbReference type="GO" id="GO:0022625">
    <property type="term" value="C:cytosolic large ribosomal subunit"/>
    <property type="evidence" value="ECO:0007669"/>
    <property type="project" value="TreeGrafter"/>
</dbReference>
<dbReference type="GO" id="GO:0019843">
    <property type="term" value="F:rRNA binding"/>
    <property type="evidence" value="ECO:0007669"/>
    <property type="project" value="UniProtKB-UniRule"/>
</dbReference>
<dbReference type="GO" id="GO:0003735">
    <property type="term" value="F:structural constituent of ribosome"/>
    <property type="evidence" value="ECO:0007669"/>
    <property type="project" value="InterPro"/>
</dbReference>
<dbReference type="GO" id="GO:0006412">
    <property type="term" value="P:translation"/>
    <property type="evidence" value="ECO:0007669"/>
    <property type="project" value="UniProtKB-UniRule"/>
</dbReference>
<dbReference type="CDD" id="cd00336">
    <property type="entry name" value="Ribosomal_L22"/>
    <property type="match status" value="1"/>
</dbReference>
<dbReference type="FunFam" id="3.90.470.10:FF:000002">
    <property type="entry name" value="50S ribosomal protein L22"/>
    <property type="match status" value="1"/>
</dbReference>
<dbReference type="Gene3D" id="3.90.470.10">
    <property type="entry name" value="Ribosomal protein L22/L17"/>
    <property type="match status" value="1"/>
</dbReference>
<dbReference type="HAMAP" id="MF_01331_B">
    <property type="entry name" value="Ribosomal_uL22_B"/>
    <property type="match status" value="1"/>
</dbReference>
<dbReference type="InterPro" id="IPR001063">
    <property type="entry name" value="Ribosomal_uL22"/>
</dbReference>
<dbReference type="InterPro" id="IPR005727">
    <property type="entry name" value="Ribosomal_uL22_bac/chlpt-type"/>
</dbReference>
<dbReference type="InterPro" id="IPR047867">
    <property type="entry name" value="Ribosomal_uL22_bac/org-type"/>
</dbReference>
<dbReference type="InterPro" id="IPR018260">
    <property type="entry name" value="Ribosomal_uL22_CS"/>
</dbReference>
<dbReference type="InterPro" id="IPR036394">
    <property type="entry name" value="Ribosomal_uL22_sf"/>
</dbReference>
<dbReference type="NCBIfam" id="TIGR01044">
    <property type="entry name" value="rplV_bact"/>
    <property type="match status" value="1"/>
</dbReference>
<dbReference type="PANTHER" id="PTHR13501">
    <property type="entry name" value="CHLOROPLAST 50S RIBOSOMAL PROTEIN L22-RELATED"/>
    <property type="match status" value="1"/>
</dbReference>
<dbReference type="PANTHER" id="PTHR13501:SF8">
    <property type="entry name" value="LARGE RIBOSOMAL SUBUNIT PROTEIN UL22M"/>
    <property type="match status" value="1"/>
</dbReference>
<dbReference type="Pfam" id="PF00237">
    <property type="entry name" value="Ribosomal_L22"/>
    <property type="match status" value="1"/>
</dbReference>
<dbReference type="SUPFAM" id="SSF54843">
    <property type="entry name" value="Ribosomal protein L22"/>
    <property type="match status" value="1"/>
</dbReference>
<dbReference type="PROSITE" id="PS00464">
    <property type="entry name" value="RIBOSOMAL_L22"/>
    <property type="match status" value="1"/>
</dbReference>
<sequence>MADDLVEGLTRAGLPGAKASARYVRVSPTKARRVVDLVRGRSVSEALDILRFAPQAASDDVYKVVASAAANAENNHSLDPATLWVGEVYVDEGPTLKRIRPRAQGRAYRIRKRTSHITVVVESREPVSAAGRGAKTTRRAR</sequence>
<proteinExistence type="inferred from homology"/>
<name>RL22_FRAAA</name>
<accession>Q0RRR6</accession>
<evidence type="ECO:0000255" key="1">
    <source>
        <dbReference type="HAMAP-Rule" id="MF_01331"/>
    </source>
</evidence>
<evidence type="ECO:0000305" key="2"/>
<comment type="function">
    <text evidence="1">This protein binds specifically to 23S rRNA; its binding is stimulated by other ribosomal proteins, e.g. L4, L17, and L20. It is important during the early stages of 50S assembly. It makes multiple contacts with different domains of the 23S rRNA in the assembled 50S subunit and ribosome (By similarity).</text>
</comment>
<comment type="function">
    <text evidence="1">The globular domain of the protein is located near the polypeptide exit tunnel on the outside of the subunit, while an extended beta-hairpin is found that lines the wall of the exit tunnel in the center of the 70S ribosome.</text>
</comment>
<comment type="subunit">
    <text evidence="1">Part of the 50S ribosomal subunit.</text>
</comment>
<comment type="similarity">
    <text evidence="1">Belongs to the universal ribosomal protein uL22 family.</text>
</comment>
<reference key="1">
    <citation type="journal article" date="2007" name="Genome Res.">
        <title>Genome characteristics of facultatively symbiotic Frankia sp. strains reflect host range and host plant biogeography.</title>
        <authorList>
            <person name="Normand P."/>
            <person name="Lapierre P."/>
            <person name="Tisa L.S."/>
            <person name="Gogarten J.P."/>
            <person name="Alloisio N."/>
            <person name="Bagnarol E."/>
            <person name="Bassi C.A."/>
            <person name="Berry A.M."/>
            <person name="Bickhart D.M."/>
            <person name="Choisne N."/>
            <person name="Couloux A."/>
            <person name="Cournoyer B."/>
            <person name="Cruveiller S."/>
            <person name="Daubin V."/>
            <person name="Demange N."/>
            <person name="Francino M.P."/>
            <person name="Goltsman E."/>
            <person name="Huang Y."/>
            <person name="Kopp O.R."/>
            <person name="Labarre L."/>
            <person name="Lapidus A."/>
            <person name="Lavire C."/>
            <person name="Marechal J."/>
            <person name="Martinez M."/>
            <person name="Mastronunzio J.E."/>
            <person name="Mullin B.C."/>
            <person name="Niemann J."/>
            <person name="Pujic P."/>
            <person name="Rawnsley T."/>
            <person name="Rouy Z."/>
            <person name="Schenowitz C."/>
            <person name="Sellstedt A."/>
            <person name="Tavares F."/>
            <person name="Tomkins J.P."/>
            <person name="Vallenet D."/>
            <person name="Valverde C."/>
            <person name="Wall L.G."/>
            <person name="Wang Y."/>
            <person name="Medigue C."/>
            <person name="Benson D.R."/>
        </authorList>
    </citation>
    <scope>NUCLEOTIDE SEQUENCE [LARGE SCALE GENOMIC DNA]</scope>
    <source>
        <strain>DSM 45986 / CECT 9034 / ACN14a</strain>
    </source>
</reference>
<organism>
    <name type="scientific">Frankia alni (strain DSM 45986 / CECT 9034 / ACN14a)</name>
    <dbReference type="NCBI Taxonomy" id="326424"/>
    <lineage>
        <taxon>Bacteria</taxon>
        <taxon>Bacillati</taxon>
        <taxon>Actinomycetota</taxon>
        <taxon>Actinomycetes</taxon>
        <taxon>Frankiales</taxon>
        <taxon>Frankiaceae</taxon>
        <taxon>Frankia</taxon>
    </lineage>
</organism>